<gene>
    <name type="primary">glnB</name>
    <name type="ordered locus">Z3829</name>
    <name type="ordered locus">ECs3419</name>
</gene>
<name>GLNB_ECO57</name>
<reference key="1">
    <citation type="journal article" date="2001" name="Nature">
        <title>Genome sequence of enterohaemorrhagic Escherichia coli O157:H7.</title>
        <authorList>
            <person name="Perna N.T."/>
            <person name="Plunkett G. III"/>
            <person name="Burland V."/>
            <person name="Mau B."/>
            <person name="Glasner J.D."/>
            <person name="Rose D.J."/>
            <person name="Mayhew G.F."/>
            <person name="Evans P.S."/>
            <person name="Gregor J."/>
            <person name="Kirkpatrick H.A."/>
            <person name="Posfai G."/>
            <person name="Hackett J."/>
            <person name="Klink S."/>
            <person name="Boutin A."/>
            <person name="Shao Y."/>
            <person name="Miller L."/>
            <person name="Grotbeck E.J."/>
            <person name="Davis N.W."/>
            <person name="Lim A."/>
            <person name="Dimalanta E.T."/>
            <person name="Potamousis K."/>
            <person name="Apodaca J."/>
            <person name="Anantharaman T.S."/>
            <person name="Lin J."/>
            <person name="Yen G."/>
            <person name="Schwartz D.C."/>
            <person name="Welch R.A."/>
            <person name="Blattner F.R."/>
        </authorList>
    </citation>
    <scope>NUCLEOTIDE SEQUENCE [LARGE SCALE GENOMIC DNA]</scope>
    <source>
        <strain>O157:H7 / EDL933 / ATCC 700927 / EHEC</strain>
    </source>
</reference>
<reference key="2">
    <citation type="journal article" date="2001" name="DNA Res.">
        <title>Complete genome sequence of enterohemorrhagic Escherichia coli O157:H7 and genomic comparison with a laboratory strain K-12.</title>
        <authorList>
            <person name="Hayashi T."/>
            <person name="Makino K."/>
            <person name="Ohnishi M."/>
            <person name="Kurokawa K."/>
            <person name="Ishii K."/>
            <person name="Yokoyama K."/>
            <person name="Han C.-G."/>
            <person name="Ohtsubo E."/>
            <person name="Nakayama K."/>
            <person name="Murata T."/>
            <person name="Tanaka M."/>
            <person name="Tobe T."/>
            <person name="Iida T."/>
            <person name="Takami H."/>
            <person name="Honda T."/>
            <person name="Sasakawa C."/>
            <person name="Ogasawara N."/>
            <person name="Yasunaga T."/>
            <person name="Kuhara S."/>
            <person name="Shiba T."/>
            <person name="Hattori M."/>
            <person name="Shinagawa H."/>
        </authorList>
    </citation>
    <scope>NUCLEOTIDE SEQUENCE [LARGE SCALE GENOMIC DNA]</scope>
    <source>
        <strain>O157:H7 / Sakai / RIMD 0509952 / EHEC</strain>
    </source>
</reference>
<protein>
    <recommendedName>
        <fullName>Nitrogen regulatory protein P-II 1</fullName>
    </recommendedName>
</protein>
<feature type="chain" id="PRO_0000139773" description="Nitrogen regulatory protein P-II 1">
    <location>
        <begin position="1"/>
        <end position="112"/>
    </location>
</feature>
<feature type="modified residue" description="O-UMP-tyrosine" evidence="2">
    <location>
        <position position="51"/>
    </location>
</feature>
<evidence type="ECO:0000250" key="1"/>
<evidence type="ECO:0000255" key="2">
    <source>
        <dbReference type="PROSITE-ProRule" id="PRU00675"/>
    </source>
</evidence>
<organism>
    <name type="scientific">Escherichia coli O157:H7</name>
    <dbReference type="NCBI Taxonomy" id="83334"/>
    <lineage>
        <taxon>Bacteria</taxon>
        <taxon>Pseudomonadati</taxon>
        <taxon>Pseudomonadota</taxon>
        <taxon>Gammaproteobacteria</taxon>
        <taxon>Enterobacterales</taxon>
        <taxon>Enterobacteriaceae</taxon>
        <taxon>Escherichia</taxon>
    </lineage>
</organism>
<accession>P0A9Z3</accession>
<accession>P05826</accession>
<keyword id="KW-0547">Nucleotide-binding</keyword>
<keyword id="KW-0597">Phosphoprotein</keyword>
<keyword id="KW-1185">Reference proteome</keyword>
<keyword id="KW-0804">Transcription</keyword>
<keyword id="KW-0805">Transcription regulation</keyword>
<proteinExistence type="inferred from homology"/>
<sequence>MKKIDAIIKPFKLDDVREALAEVGITGMTVTEVKGFGRQKGHTELYRGAEYMVDFLPKVKIEIVVPDDIVDTCVDTIIRTAQTGKIGDGKIFVFDVARVIRIRTGEEDDAAI</sequence>
<comment type="function">
    <text evidence="1">P-II indirectly controls the transcription of the glutamine synthetase gene (GlnA). P-II prevents NR-II-catalyzed conversion of NR-I to NR-I-phosphate, the transcriptional activator of GlnA. When P-II is uridylylated to P-II-UMP, these events are reversed. When the ratio of Gln to 2-ketoglutarate decreases, P-II is uridylylated to P-II-UMP, which causes the deadenylation of glutamine synthetase by GlnE, so activating the enzyme (By similarity).</text>
</comment>
<comment type="subunit">
    <text evidence="1">Homotrimer.</text>
</comment>
<comment type="PTM">
    <text evidence="1">Uridylylated/deuridylylated by GlnD.</text>
</comment>
<comment type="similarity">
    <text evidence="2">Belongs to the P(II) protein family.</text>
</comment>
<dbReference type="EMBL" id="AE005174">
    <property type="protein sequence ID" value="AAG57667.1"/>
    <property type="molecule type" value="Genomic_DNA"/>
</dbReference>
<dbReference type="EMBL" id="BA000007">
    <property type="protein sequence ID" value="BAB36842.1"/>
    <property type="molecule type" value="Genomic_DNA"/>
</dbReference>
<dbReference type="PIR" id="C91056">
    <property type="entry name" value="C91056"/>
</dbReference>
<dbReference type="RefSeq" id="NP_311446.1">
    <property type="nucleotide sequence ID" value="NC_002695.1"/>
</dbReference>
<dbReference type="RefSeq" id="WP_000717694.1">
    <property type="nucleotide sequence ID" value="NZ_VOAI01000001.1"/>
</dbReference>
<dbReference type="SMR" id="P0A9Z3"/>
<dbReference type="STRING" id="155864.Z3829"/>
<dbReference type="GeneID" id="914897"/>
<dbReference type="GeneID" id="93774582"/>
<dbReference type="KEGG" id="ece:Z3829"/>
<dbReference type="KEGG" id="ecs:ECs_3419"/>
<dbReference type="PATRIC" id="fig|386585.9.peg.3573"/>
<dbReference type="eggNOG" id="COG0347">
    <property type="taxonomic scope" value="Bacteria"/>
</dbReference>
<dbReference type="HOGENOM" id="CLU_082268_0_0_6"/>
<dbReference type="OMA" id="VECIIRP"/>
<dbReference type="Proteomes" id="UP000000558">
    <property type="component" value="Chromosome"/>
</dbReference>
<dbReference type="Proteomes" id="UP000002519">
    <property type="component" value="Chromosome"/>
</dbReference>
<dbReference type="GO" id="GO:0005829">
    <property type="term" value="C:cytosol"/>
    <property type="evidence" value="ECO:0007669"/>
    <property type="project" value="TreeGrafter"/>
</dbReference>
<dbReference type="GO" id="GO:0005524">
    <property type="term" value="F:ATP binding"/>
    <property type="evidence" value="ECO:0007669"/>
    <property type="project" value="TreeGrafter"/>
</dbReference>
<dbReference type="GO" id="GO:0030234">
    <property type="term" value="F:enzyme regulator activity"/>
    <property type="evidence" value="ECO:0007669"/>
    <property type="project" value="InterPro"/>
</dbReference>
<dbReference type="GO" id="GO:0006808">
    <property type="term" value="P:regulation of nitrogen utilization"/>
    <property type="evidence" value="ECO:0007669"/>
    <property type="project" value="InterPro"/>
</dbReference>
<dbReference type="FunFam" id="3.30.70.120:FF:000001">
    <property type="entry name" value="Nitrogen regulatory protein P-II"/>
    <property type="match status" value="1"/>
</dbReference>
<dbReference type="Gene3D" id="3.30.70.120">
    <property type="match status" value="1"/>
</dbReference>
<dbReference type="InterPro" id="IPR002187">
    <property type="entry name" value="N-reg_PII"/>
</dbReference>
<dbReference type="InterPro" id="IPR011322">
    <property type="entry name" value="N-reg_PII-like_a/b"/>
</dbReference>
<dbReference type="InterPro" id="IPR015867">
    <property type="entry name" value="N-reg_PII/ATP_PRibTrfase_C"/>
</dbReference>
<dbReference type="InterPro" id="IPR017918">
    <property type="entry name" value="N-reg_PII_CS"/>
</dbReference>
<dbReference type="InterPro" id="IPR002332">
    <property type="entry name" value="N-reg_PII_urydylation_site"/>
</dbReference>
<dbReference type="NCBIfam" id="NF008111">
    <property type="entry name" value="PRK10858.1"/>
    <property type="match status" value="1"/>
</dbReference>
<dbReference type="PANTHER" id="PTHR30115">
    <property type="entry name" value="NITROGEN REGULATORY PROTEIN P-II"/>
    <property type="match status" value="1"/>
</dbReference>
<dbReference type="PANTHER" id="PTHR30115:SF11">
    <property type="entry name" value="NITROGEN REGULATORY PROTEIN P-II HOMOLOG"/>
    <property type="match status" value="1"/>
</dbReference>
<dbReference type="Pfam" id="PF00543">
    <property type="entry name" value="P-II"/>
    <property type="match status" value="1"/>
</dbReference>
<dbReference type="PIRSF" id="PIRSF039144">
    <property type="entry name" value="GlnB"/>
    <property type="match status" value="1"/>
</dbReference>
<dbReference type="PRINTS" id="PR00340">
    <property type="entry name" value="PIIGLNB"/>
</dbReference>
<dbReference type="SMART" id="SM00938">
    <property type="entry name" value="P-II"/>
    <property type="match status" value="1"/>
</dbReference>
<dbReference type="SUPFAM" id="SSF54913">
    <property type="entry name" value="GlnB-like"/>
    <property type="match status" value="1"/>
</dbReference>
<dbReference type="PROSITE" id="PS00638">
    <property type="entry name" value="PII_GLNB_CTER"/>
    <property type="match status" value="1"/>
</dbReference>
<dbReference type="PROSITE" id="PS51343">
    <property type="entry name" value="PII_GLNB_DOM"/>
    <property type="match status" value="1"/>
</dbReference>
<dbReference type="PROSITE" id="PS00496">
    <property type="entry name" value="PII_GLNB_UMP"/>
    <property type="match status" value="1"/>
</dbReference>